<accession>A4XZ73</accession>
<keyword id="KW-0687">Ribonucleoprotein</keyword>
<keyword id="KW-0689">Ribosomal protein</keyword>
<keyword id="KW-0694">RNA-binding</keyword>
<keyword id="KW-0699">rRNA-binding</keyword>
<dbReference type="EMBL" id="CP000680">
    <property type="protein sequence ID" value="ABP86639.1"/>
    <property type="molecule type" value="Genomic_DNA"/>
</dbReference>
<dbReference type="SMR" id="A4XZ73"/>
<dbReference type="STRING" id="399739.Pmen_3892"/>
<dbReference type="KEGG" id="pmy:Pmen_3892"/>
<dbReference type="eggNOG" id="COG0098">
    <property type="taxonomic scope" value="Bacteria"/>
</dbReference>
<dbReference type="HOGENOM" id="CLU_065898_2_2_6"/>
<dbReference type="OrthoDB" id="9809045at2"/>
<dbReference type="GO" id="GO:0015935">
    <property type="term" value="C:small ribosomal subunit"/>
    <property type="evidence" value="ECO:0007669"/>
    <property type="project" value="InterPro"/>
</dbReference>
<dbReference type="GO" id="GO:0019843">
    <property type="term" value="F:rRNA binding"/>
    <property type="evidence" value="ECO:0007669"/>
    <property type="project" value="UniProtKB-UniRule"/>
</dbReference>
<dbReference type="GO" id="GO:0003735">
    <property type="term" value="F:structural constituent of ribosome"/>
    <property type="evidence" value="ECO:0007669"/>
    <property type="project" value="InterPro"/>
</dbReference>
<dbReference type="GO" id="GO:0006412">
    <property type="term" value="P:translation"/>
    <property type="evidence" value="ECO:0007669"/>
    <property type="project" value="UniProtKB-UniRule"/>
</dbReference>
<dbReference type="FunFam" id="3.30.160.20:FF:000001">
    <property type="entry name" value="30S ribosomal protein S5"/>
    <property type="match status" value="1"/>
</dbReference>
<dbReference type="FunFam" id="3.30.230.10:FF:000002">
    <property type="entry name" value="30S ribosomal protein S5"/>
    <property type="match status" value="1"/>
</dbReference>
<dbReference type="Gene3D" id="3.30.160.20">
    <property type="match status" value="1"/>
</dbReference>
<dbReference type="Gene3D" id="3.30.230.10">
    <property type="match status" value="1"/>
</dbReference>
<dbReference type="HAMAP" id="MF_01307_B">
    <property type="entry name" value="Ribosomal_uS5_B"/>
    <property type="match status" value="1"/>
</dbReference>
<dbReference type="InterPro" id="IPR020568">
    <property type="entry name" value="Ribosomal_Su5_D2-typ_SF"/>
</dbReference>
<dbReference type="InterPro" id="IPR000851">
    <property type="entry name" value="Ribosomal_uS5"/>
</dbReference>
<dbReference type="InterPro" id="IPR005712">
    <property type="entry name" value="Ribosomal_uS5_bac-type"/>
</dbReference>
<dbReference type="InterPro" id="IPR005324">
    <property type="entry name" value="Ribosomal_uS5_C"/>
</dbReference>
<dbReference type="InterPro" id="IPR013810">
    <property type="entry name" value="Ribosomal_uS5_N"/>
</dbReference>
<dbReference type="InterPro" id="IPR018192">
    <property type="entry name" value="Ribosomal_uS5_N_CS"/>
</dbReference>
<dbReference type="InterPro" id="IPR014721">
    <property type="entry name" value="Ribsml_uS5_D2-typ_fold_subgr"/>
</dbReference>
<dbReference type="NCBIfam" id="TIGR01021">
    <property type="entry name" value="rpsE_bact"/>
    <property type="match status" value="1"/>
</dbReference>
<dbReference type="PANTHER" id="PTHR48432">
    <property type="entry name" value="S5 DRBM DOMAIN-CONTAINING PROTEIN"/>
    <property type="match status" value="1"/>
</dbReference>
<dbReference type="PANTHER" id="PTHR48432:SF1">
    <property type="entry name" value="S5 DRBM DOMAIN-CONTAINING PROTEIN"/>
    <property type="match status" value="1"/>
</dbReference>
<dbReference type="Pfam" id="PF00333">
    <property type="entry name" value="Ribosomal_S5"/>
    <property type="match status" value="1"/>
</dbReference>
<dbReference type="Pfam" id="PF03719">
    <property type="entry name" value="Ribosomal_S5_C"/>
    <property type="match status" value="1"/>
</dbReference>
<dbReference type="SUPFAM" id="SSF54768">
    <property type="entry name" value="dsRNA-binding domain-like"/>
    <property type="match status" value="1"/>
</dbReference>
<dbReference type="SUPFAM" id="SSF54211">
    <property type="entry name" value="Ribosomal protein S5 domain 2-like"/>
    <property type="match status" value="1"/>
</dbReference>
<dbReference type="PROSITE" id="PS00585">
    <property type="entry name" value="RIBOSOMAL_S5"/>
    <property type="match status" value="1"/>
</dbReference>
<dbReference type="PROSITE" id="PS50881">
    <property type="entry name" value="S5_DSRBD"/>
    <property type="match status" value="1"/>
</dbReference>
<sequence length="166" mass="17662">MANNDQKRDEGYIEKLVQVNRVAKTVKGGRIFTFTALTVVGDGKGRVGFGRGKSREVPAAIQKAMEAARRNMIQVDLNGTTLQYPIKSAHGASKVYMQPASEGTGIIAGGAMRAVLEVAGVQNVLAKCYGSTNPVNVVHATFKGLKTMQSPESVAAKRGKSVEEIL</sequence>
<evidence type="ECO:0000255" key="1">
    <source>
        <dbReference type="HAMAP-Rule" id="MF_01307"/>
    </source>
</evidence>
<evidence type="ECO:0000305" key="2"/>
<gene>
    <name evidence="1" type="primary">rpsE</name>
    <name type="ordered locus">Pmen_3892</name>
</gene>
<comment type="function">
    <text evidence="1">With S4 and S12 plays an important role in translational accuracy.</text>
</comment>
<comment type="function">
    <text evidence="1">Located at the back of the 30S subunit body where it stabilizes the conformation of the head with respect to the body.</text>
</comment>
<comment type="subunit">
    <text evidence="1">Part of the 30S ribosomal subunit. Contacts proteins S4 and S8.</text>
</comment>
<comment type="domain">
    <text>The N-terminal domain interacts with the head of the 30S subunit; the C-terminal domain interacts with the body and contacts protein S4. The interaction surface between S4 and S5 is involved in control of translational fidelity.</text>
</comment>
<comment type="similarity">
    <text evidence="1">Belongs to the universal ribosomal protein uS5 family.</text>
</comment>
<protein>
    <recommendedName>
        <fullName evidence="1">Small ribosomal subunit protein uS5</fullName>
    </recommendedName>
    <alternativeName>
        <fullName evidence="2">30S ribosomal protein S5</fullName>
    </alternativeName>
</protein>
<feature type="chain" id="PRO_0000323174" description="Small ribosomal subunit protein uS5">
    <location>
        <begin position="1"/>
        <end position="166"/>
    </location>
</feature>
<feature type="domain" description="S5 DRBM" evidence="1">
    <location>
        <begin position="12"/>
        <end position="75"/>
    </location>
</feature>
<proteinExistence type="inferred from homology"/>
<reference key="1">
    <citation type="submission" date="2007-04" db="EMBL/GenBank/DDBJ databases">
        <title>Complete sequence of Pseudomonas mendocina ymp.</title>
        <authorList>
            <consortium name="US DOE Joint Genome Institute"/>
            <person name="Copeland A."/>
            <person name="Lucas S."/>
            <person name="Lapidus A."/>
            <person name="Barry K."/>
            <person name="Glavina del Rio T."/>
            <person name="Dalin E."/>
            <person name="Tice H."/>
            <person name="Pitluck S."/>
            <person name="Kiss H."/>
            <person name="Brettin T."/>
            <person name="Detter J.C."/>
            <person name="Bruce D."/>
            <person name="Han C."/>
            <person name="Schmutz J."/>
            <person name="Larimer F."/>
            <person name="Land M."/>
            <person name="Hauser L."/>
            <person name="Kyrpides N."/>
            <person name="Mikhailova N."/>
            <person name="Hersman L."/>
            <person name="Dubois J."/>
            <person name="Maurice P."/>
            <person name="Richardson P."/>
        </authorList>
    </citation>
    <scope>NUCLEOTIDE SEQUENCE [LARGE SCALE GENOMIC DNA]</scope>
    <source>
        <strain>ymp</strain>
    </source>
</reference>
<organism>
    <name type="scientific">Ectopseudomonas mendocina (strain ymp)</name>
    <name type="common">Pseudomonas mendocina</name>
    <dbReference type="NCBI Taxonomy" id="399739"/>
    <lineage>
        <taxon>Bacteria</taxon>
        <taxon>Pseudomonadati</taxon>
        <taxon>Pseudomonadota</taxon>
        <taxon>Gammaproteobacteria</taxon>
        <taxon>Pseudomonadales</taxon>
        <taxon>Pseudomonadaceae</taxon>
        <taxon>Ectopseudomonas</taxon>
    </lineage>
</organism>
<name>RS5_ECTM1</name>